<name>MOAC_ACTP7</name>
<organism>
    <name type="scientific">Actinobacillus pleuropneumoniae serotype 7 (strain AP76)</name>
    <dbReference type="NCBI Taxonomy" id="537457"/>
    <lineage>
        <taxon>Bacteria</taxon>
        <taxon>Pseudomonadati</taxon>
        <taxon>Pseudomonadota</taxon>
        <taxon>Gammaproteobacteria</taxon>
        <taxon>Pasteurellales</taxon>
        <taxon>Pasteurellaceae</taxon>
        <taxon>Actinobacillus</taxon>
    </lineage>
</organism>
<protein>
    <recommendedName>
        <fullName evidence="1">Cyclic pyranopterin monophosphate synthase</fullName>
        <ecNumber evidence="1">4.6.1.17</ecNumber>
    </recommendedName>
    <alternativeName>
        <fullName evidence="1">Molybdenum cofactor biosynthesis protein C</fullName>
    </alternativeName>
</protein>
<comment type="function">
    <text evidence="1">Catalyzes the conversion of (8S)-3',8-cyclo-7,8-dihydroguanosine 5'-triphosphate to cyclic pyranopterin monophosphate (cPMP).</text>
</comment>
<comment type="catalytic activity">
    <reaction evidence="1">
        <text>(8S)-3',8-cyclo-7,8-dihydroguanosine 5'-triphosphate = cyclic pyranopterin phosphate + diphosphate</text>
        <dbReference type="Rhea" id="RHEA:49580"/>
        <dbReference type="ChEBI" id="CHEBI:33019"/>
        <dbReference type="ChEBI" id="CHEBI:59648"/>
        <dbReference type="ChEBI" id="CHEBI:131766"/>
        <dbReference type="EC" id="4.6.1.17"/>
    </reaction>
</comment>
<comment type="pathway">
    <text evidence="1">Cofactor biosynthesis; molybdopterin biosynthesis.</text>
</comment>
<comment type="subunit">
    <text evidence="1">Homohexamer; trimer of dimers.</text>
</comment>
<comment type="similarity">
    <text evidence="1">Belongs to the MoaC family.</text>
</comment>
<evidence type="ECO:0000255" key="1">
    <source>
        <dbReference type="HAMAP-Rule" id="MF_01224"/>
    </source>
</evidence>
<keyword id="KW-0456">Lyase</keyword>
<keyword id="KW-0501">Molybdenum cofactor biosynthesis</keyword>
<dbReference type="EC" id="4.6.1.17" evidence="1"/>
<dbReference type="EMBL" id="CP001091">
    <property type="protein sequence ID" value="ACE61385.1"/>
    <property type="molecule type" value="Genomic_DNA"/>
</dbReference>
<dbReference type="RefSeq" id="WP_005597027.1">
    <property type="nucleotide sequence ID" value="NC_010939.1"/>
</dbReference>
<dbReference type="SMR" id="B3GXC6"/>
<dbReference type="GeneID" id="92744839"/>
<dbReference type="KEGG" id="apa:APP7_0733"/>
<dbReference type="HOGENOM" id="CLU_074693_1_1_6"/>
<dbReference type="UniPathway" id="UPA00344"/>
<dbReference type="Proteomes" id="UP000001226">
    <property type="component" value="Chromosome"/>
</dbReference>
<dbReference type="GO" id="GO:0061799">
    <property type="term" value="F:cyclic pyranopterin monophosphate synthase activity"/>
    <property type="evidence" value="ECO:0007669"/>
    <property type="project" value="UniProtKB-UniRule"/>
</dbReference>
<dbReference type="GO" id="GO:0061798">
    <property type="term" value="F:GTP 3',8'-cyclase activity"/>
    <property type="evidence" value="ECO:0007669"/>
    <property type="project" value="TreeGrafter"/>
</dbReference>
<dbReference type="GO" id="GO:0006777">
    <property type="term" value="P:Mo-molybdopterin cofactor biosynthetic process"/>
    <property type="evidence" value="ECO:0007669"/>
    <property type="project" value="UniProtKB-UniRule"/>
</dbReference>
<dbReference type="CDD" id="cd01420">
    <property type="entry name" value="MoaC_PE"/>
    <property type="match status" value="1"/>
</dbReference>
<dbReference type="FunFam" id="3.30.70.640:FF:000001">
    <property type="entry name" value="Cyclic pyranopterin monophosphate synthase"/>
    <property type="match status" value="1"/>
</dbReference>
<dbReference type="Gene3D" id="3.30.70.640">
    <property type="entry name" value="Molybdopterin cofactor biosynthesis C (MoaC) domain"/>
    <property type="match status" value="1"/>
</dbReference>
<dbReference type="HAMAP" id="MF_01224_B">
    <property type="entry name" value="MoaC_B"/>
    <property type="match status" value="1"/>
</dbReference>
<dbReference type="InterPro" id="IPR023045">
    <property type="entry name" value="MoaC"/>
</dbReference>
<dbReference type="InterPro" id="IPR047594">
    <property type="entry name" value="MoaC_bact/euk"/>
</dbReference>
<dbReference type="InterPro" id="IPR036522">
    <property type="entry name" value="MoaC_sf"/>
</dbReference>
<dbReference type="InterPro" id="IPR050105">
    <property type="entry name" value="MoCo_biosynth_MoaA/MoaC"/>
</dbReference>
<dbReference type="InterPro" id="IPR002820">
    <property type="entry name" value="Mopterin_CF_biosynth-C_dom"/>
</dbReference>
<dbReference type="NCBIfam" id="TIGR00581">
    <property type="entry name" value="moaC"/>
    <property type="match status" value="1"/>
</dbReference>
<dbReference type="NCBIfam" id="NF006870">
    <property type="entry name" value="PRK09364.1"/>
    <property type="match status" value="1"/>
</dbReference>
<dbReference type="PANTHER" id="PTHR22960:SF0">
    <property type="entry name" value="MOLYBDENUM COFACTOR BIOSYNTHESIS PROTEIN 1"/>
    <property type="match status" value="1"/>
</dbReference>
<dbReference type="PANTHER" id="PTHR22960">
    <property type="entry name" value="MOLYBDOPTERIN COFACTOR SYNTHESIS PROTEIN A"/>
    <property type="match status" value="1"/>
</dbReference>
<dbReference type="Pfam" id="PF01967">
    <property type="entry name" value="MoaC"/>
    <property type="match status" value="1"/>
</dbReference>
<dbReference type="SUPFAM" id="SSF55040">
    <property type="entry name" value="Molybdenum cofactor biosynthesis protein C, MoaC"/>
    <property type="match status" value="1"/>
</dbReference>
<reference key="1">
    <citation type="submission" date="2008-06" db="EMBL/GenBank/DDBJ databases">
        <title>Genome and proteome analysis of A. pleuropneumoniae serotype 7.</title>
        <authorList>
            <person name="Linke B."/>
            <person name="Buettner F."/>
            <person name="Martinez-Arias R."/>
            <person name="Goesmann A."/>
            <person name="Baltes N."/>
            <person name="Tegetmeyer H."/>
            <person name="Singh M."/>
            <person name="Gerlach G.F."/>
        </authorList>
    </citation>
    <scope>NUCLEOTIDE SEQUENCE [LARGE SCALE GENOMIC DNA]</scope>
    <source>
        <strain>AP76</strain>
    </source>
</reference>
<gene>
    <name evidence="1" type="primary">moaC</name>
    <name type="ordered locus">APP7_0733</name>
</gene>
<proteinExistence type="inferred from homology"/>
<sequence>MNQFTHINTNGEANMVDVSMKQETVRVARAEAFVSMNAETLQMIISGNHHKGDVFATARIAGIQAAKRTWELIPLCHPLLLSKVEVQLEALPETNQVRIESLCKLTGKTGVEMEALTAASVAALTIYDMCKAVQKDMVIENVRLLHKSGGKSGEFNAE</sequence>
<accession>B3GXC6</accession>
<feature type="chain" id="PRO_1000139238" description="Cyclic pyranopterin monophosphate synthase">
    <location>
        <begin position="1"/>
        <end position="158"/>
    </location>
</feature>
<feature type="active site" evidence="1">
    <location>
        <position position="128"/>
    </location>
</feature>
<feature type="binding site" evidence="1">
    <location>
        <begin position="75"/>
        <end position="77"/>
    </location>
    <ligand>
        <name>substrate</name>
    </ligand>
</feature>
<feature type="binding site" evidence="1">
    <location>
        <begin position="113"/>
        <end position="114"/>
    </location>
    <ligand>
        <name>substrate</name>
    </ligand>
</feature>